<keyword id="KW-0963">Cytoplasm</keyword>
<keyword id="KW-0444">Lipid biosynthesis</keyword>
<keyword id="KW-0443">Lipid metabolism</keyword>
<keyword id="KW-0594">Phospholipid biosynthesis</keyword>
<keyword id="KW-1208">Phospholipid metabolism</keyword>
<keyword id="KW-0808">Transferase</keyword>
<name>PLSX_BRUME</name>
<accession>Q8YGH8</accession>
<evidence type="ECO:0000255" key="1">
    <source>
        <dbReference type="HAMAP-Rule" id="MF_00019"/>
    </source>
</evidence>
<proteinExistence type="inferred from homology"/>
<reference key="1">
    <citation type="journal article" date="2002" name="Proc. Natl. Acad. Sci. U.S.A.">
        <title>The genome sequence of the facultative intracellular pathogen Brucella melitensis.</title>
        <authorList>
            <person name="DelVecchio V.G."/>
            <person name="Kapatral V."/>
            <person name="Redkar R.J."/>
            <person name="Patra G."/>
            <person name="Mujer C."/>
            <person name="Los T."/>
            <person name="Ivanova N."/>
            <person name="Anderson I."/>
            <person name="Bhattacharyya A."/>
            <person name="Lykidis A."/>
            <person name="Reznik G."/>
            <person name="Jablonski L."/>
            <person name="Larsen N."/>
            <person name="D'Souza M."/>
            <person name="Bernal A."/>
            <person name="Mazur M."/>
            <person name="Goltsman E."/>
            <person name="Selkov E."/>
            <person name="Elzer P.H."/>
            <person name="Hagius S."/>
            <person name="O'Callaghan D."/>
            <person name="Letesson J.-J."/>
            <person name="Haselkorn R."/>
            <person name="Kyrpides N.C."/>
            <person name="Overbeek R."/>
        </authorList>
    </citation>
    <scope>NUCLEOTIDE SEQUENCE [LARGE SCALE GENOMIC DNA]</scope>
    <source>
        <strain>ATCC 23456 / CCUG 17765 / NCTC 10094 / 16M</strain>
    </source>
</reference>
<comment type="function">
    <text evidence="1">Catalyzes the reversible formation of acyl-phosphate (acyl-PO(4)) from acyl-[acyl-carrier-protein] (acyl-ACP). This enzyme utilizes acyl-ACP as fatty acyl donor, but not acyl-CoA.</text>
</comment>
<comment type="catalytic activity">
    <reaction evidence="1">
        <text>a fatty acyl-[ACP] + phosphate = an acyl phosphate + holo-[ACP]</text>
        <dbReference type="Rhea" id="RHEA:42292"/>
        <dbReference type="Rhea" id="RHEA-COMP:9685"/>
        <dbReference type="Rhea" id="RHEA-COMP:14125"/>
        <dbReference type="ChEBI" id="CHEBI:43474"/>
        <dbReference type="ChEBI" id="CHEBI:59918"/>
        <dbReference type="ChEBI" id="CHEBI:64479"/>
        <dbReference type="ChEBI" id="CHEBI:138651"/>
        <dbReference type="EC" id="2.3.1.274"/>
    </reaction>
</comment>
<comment type="pathway">
    <text evidence="1">Lipid metabolism; phospholipid metabolism.</text>
</comment>
<comment type="subunit">
    <text evidence="1">Homodimer. Probably interacts with PlsY.</text>
</comment>
<comment type="subcellular location">
    <subcellularLocation>
        <location evidence="1">Cytoplasm</location>
    </subcellularLocation>
    <text evidence="1">Associated with the membrane possibly through PlsY.</text>
</comment>
<comment type="similarity">
    <text evidence="1">Belongs to the PlsX family.</text>
</comment>
<dbReference type="EC" id="2.3.1.274" evidence="1"/>
<dbReference type="EMBL" id="AE008917">
    <property type="protein sequence ID" value="AAL52362.1"/>
    <property type="molecule type" value="Genomic_DNA"/>
</dbReference>
<dbReference type="PIR" id="AG3399">
    <property type="entry name" value="AG3399"/>
</dbReference>
<dbReference type="RefSeq" id="WP_004683580.1">
    <property type="nucleotide sequence ID" value="NZ_GG703778.1"/>
</dbReference>
<dbReference type="SMR" id="Q8YGH8"/>
<dbReference type="GeneID" id="29594024"/>
<dbReference type="KEGG" id="bme:BMEI1181"/>
<dbReference type="KEGG" id="bmel:DK63_228"/>
<dbReference type="PATRIC" id="fig|224914.52.peg.236"/>
<dbReference type="eggNOG" id="COG0416">
    <property type="taxonomic scope" value="Bacteria"/>
</dbReference>
<dbReference type="PhylomeDB" id="Q8YGH8"/>
<dbReference type="UniPathway" id="UPA00085"/>
<dbReference type="Proteomes" id="UP000000419">
    <property type="component" value="Chromosome I"/>
</dbReference>
<dbReference type="GO" id="GO:0005737">
    <property type="term" value="C:cytoplasm"/>
    <property type="evidence" value="ECO:0007669"/>
    <property type="project" value="UniProtKB-SubCell"/>
</dbReference>
<dbReference type="GO" id="GO:0043811">
    <property type="term" value="F:phosphate:acyl-[acyl carrier protein] acyltransferase activity"/>
    <property type="evidence" value="ECO:0007669"/>
    <property type="project" value="UniProtKB-UniRule"/>
</dbReference>
<dbReference type="GO" id="GO:0006633">
    <property type="term" value="P:fatty acid biosynthetic process"/>
    <property type="evidence" value="ECO:0007669"/>
    <property type="project" value="UniProtKB-UniRule"/>
</dbReference>
<dbReference type="GO" id="GO:0008654">
    <property type="term" value="P:phospholipid biosynthetic process"/>
    <property type="evidence" value="ECO:0007669"/>
    <property type="project" value="UniProtKB-KW"/>
</dbReference>
<dbReference type="Gene3D" id="3.40.718.10">
    <property type="entry name" value="Isopropylmalate Dehydrogenase"/>
    <property type="match status" value="1"/>
</dbReference>
<dbReference type="HAMAP" id="MF_00019">
    <property type="entry name" value="PlsX"/>
    <property type="match status" value="1"/>
</dbReference>
<dbReference type="InterPro" id="IPR003664">
    <property type="entry name" value="FA_synthesis"/>
</dbReference>
<dbReference type="InterPro" id="IPR012281">
    <property type="entry name" value="Phospholipid_synth_PlsX-like"/>
</dbReference>
<dbReference type="NCBIfam" id="TIGR00182">
    <property type="entry name" value="plsX"/>
    <property type="match status" value="1"/>
</dbReference>
<dbReference type="PANTHER" id="PTHR30100">
    <property type="entry name" value="FATTY ACID/PHOSPHOLIPID SYNTHESIS PROTEIN PLSX"/>
    <property type="match status" value="1"/>
</dbReference>
<dbReference type="PANTHER" id="PTHR30100:SF1">
    <property type="entry name" value="PHOSPHATE ACYLTRANSFERASE"/>
    <property type="match status" value="1"/>
</dbReference>
<dbReference type="Pfam" id="PF02504">
    <property type="entry name" value="FA_synthesis"/>
    <property type="match status" value="1"/>
</dbReference>
<dbReference type="PIRSF" id="PIRSF002465">
    <property type="entry name" value="Phsphlp_syn_PlsX"/>
    <property type="match status" value="1"/>
</dbReference>
<dbReference type="SUPFAM" id="SSF53659">
    <property type="entry name" value="Isocitrate/Isopropylmalate dehydrogenase-like"/>
    <property type="match status" value="1"/>
</dbReference>
<organism>
    <name type="scientific">Brucella melitensis biotype 1 (strain ATCC 23456 / CCUG 17765 / NCTC 10094 / 16M)</name>
    <dbReference type="NCBI Taxonomy" id="224914"/>
    <lineage>
        <taxon>Bacteria</taxon>
        <taxon>Pseudomonadati</taxon>
        <taxon>Pseudomonadota</taxon>
        <taxon>Alphaproteobacteria</taxon>
        <taxon>Hyphomicrobiales</taxon>
        <taxon>Brucellaceae</taxon>
        <taxon>Brucella/Ochrobactrum group</taxon>
        <taxon>Brucella</taxon>
    </lineage>
</organism>
<protein>
    <recommendedName>
        <fullName evidence="1">Phosphate acyltransferase</fullName>
        <ecNumber evidence="1">2.3.1.274</ecNumber>
    </recommendedName>
    <alternativeName>
        <fullName evidence="1">Acyl-ACP phosphotransacylase</fullName>
    </alternativeName>
    <alternativeName>
        <fullName evidence="1">Acyl-[acyl-carrier-protein]--phosphate acyltransferase</fullName>
    </alternativeName>
    <alternativeName>
        <fullName evidence="1">Phosphate-acyl-ACP acyltransferase</fullName>
    </alternativeName>
</protein>
<feature type="chain" id="PRO_0000189854" description="Phosphate acyltransferase">
    <location>
        <begin position="1"/>
        <end position="346"/>
    </location>
</feature>
<gene>
    <name evidence="1" type="primary">plsX</name>
    <name type="ordered locus">BMEI1181</name>
</gene>
<sequence>MIKISIDAMGGDFGPEVVIPGAAKAFERHPDIRFIFFGLPAQVEPVLARYPKLKEASEFRASEVAIGMDDKPSQALRAGRGKSSMWQAIEAVKTGDADACVSAGNTGALMAMSKFCLRMMSDVERPAIAGIWPTLRGESIVLDIGATIGADARQLVDYAVMGAGMARALFEVRKPTVGLLNVGTEEVKGLDEIKEAGQILRDTPLDGLEYSGFVEGNDIGKGTVDAVVTEGFTGNIALKTAEGTARQMAELLRQAMSRTLLAKIGYVFAKGAFDRLREKMDPNKVNGGVFLGLSGIVIKSHGGANAEGFCSAVEVGYDMVRNRLLEKIEADLAHFHHSHSHVSSKA</sequence>